<dbReference type="EC" id="1.1.1.-" evidence="6"/>
<dbReference type="EMBL" id="MW248390">
    <property type="protein sequence ID" value="QVR97764.1"/>
    <property type="molecule type" value="Genomic_DNA"/>
</dbReference>
<dbReference type="SMR" id="A0A8K1AW51"/>
<dbReference type="UniPathway" id="UPA00213"/>
<dbReference type="GO" id="GO:0016020">
    <property type="term" value="C:membrane"/>
    <property type="evidence" value="ECO:0007669"/>
    <property type="project" value="UniProtKB-SubCell"/>
</dbReference>
<dbReference type="GO" id="GO:0016616">
    <property type="term" value="F:oxidoreductase activity, acting on the CH-OH group of donors, NAD or NADP as acceptor"/>
    <property type="evidence" value="ECO:0007669"/>
    <property type="project" value="TreeGrafter"/>
</dbReference>
<dbReference type="GO" id="GO:0016114">
    <property type="term" value="P:terpenoid biosynthetic process"/>
    <property type="evidence" value="ECO:0007669"/>
    <property type="project" value="UniProtKB-UniPathway"/>
</dbReference>
<dbReference type="Gene3D" id="3.40.50.720">
    <property type="entry name" value="NAD(P)-binding Rossmann-like Domain"/>
    <property type="match status" value="1"/>
</dbReference>
<dbReference type="InterPro" id="IPR001509">
    <property type="entry name" value="Epimerase_deHydtase"/>
</dbReference>
<dbReference type="InterPro" id="IPR036291">
    <property type="entry name" value="NAD(P)-bd_dom_sf"/>
</dbReference>
<dbReference type="InterPro" id="IPR050425">
    <property type="entry name" value="NAD(P)_dehydrat-like"/>
</dbReference>
<dbReference type="PANTHER" id="PTHR10366:SF562">
    <property type="entry name" value="ALDEHYDE REDUCTASE II (AFU_ORTHOLOGUE AFUA_1G11360)"/>
    <property type="match status" value="1"/>
</dbReference>
<dbReference type="PANTHER" id="PTHR10366">
    <property type="entry name" value="NAD DEPENDENT EPIMERASE/DEHYDRATASE"/>
    <property type="match status" value="1"/>
</dbReference>
<dbReference type="Pfam" id="PF01370">
    <property type="entry name" value="Epimerase"/>
    <property type="match status" value="1"/>
</dbReference>
<dbReference type="SUPFAM" id="SSF51735">
    <property type="entry name" value="NAD(P)-binding Rossmann-fold domains"/>
    <property type="match status" value="1"/>
</dbReference>
<accession>A0A8K1AW51</accession>
<comment type="function">
    <text evidence="3">NAD-dependent epimerase/dehydratase; part of the gene cluster that mediates the biosynthesis of talaronoid C, a fusicoccane diterpenoid with an unprecedented tricyclic 5/8/6 ring system (PubMed:36126322). The first step in the pathway is performed by the fusicoccadiene synthase tndC that possesses both prenyl transferase and terpene cyclase activity, converting isopentenyl diphosphate and dimethylallyl diphosphate into geranylgeranyl diphosphate (GGDP) and further converting GGDP into talarodiene, a precursor for talaronoid C (PubMed:36126322). The remaining enzymes from the cluster include the cytochrome P450 monooxygenase tndB, the aldehyde reductase tndE and the alcohol dehydrogenase tndF that are involved in the conversion of talarodiene into talaronoid C (PubMed:36126322).</text>
</comment>
<comment type="pathway">
    <text evidence="6">Secondary metabolite biosynthesis; terpenoid biosynthesis.</text>
</comment>
<comment type="subcellular location">
    <subcellularLocation>
        <location evidence="2">Membrane</location>
        <topology evidence="2">Single-pass membrane protein</topology>
    </subcellularLocation>
</comment>
<comment type="similarity">
    <text evidence="5">Belongs to the NAD(P)-dependent epimerase/dehydratase family. Dihydroflavonol-4-reductase subfamily.</text>
</comment>
<evidence type="ECO:0000250" key="1">
    <source>
        <dbReference type="UniProtKB" id="A0A059TC02"/>
    </source>
</evidence>
<evidence type="ECO:0000255" key="2"/>
<evidence type="ECO:0000269" key="3">
    <source>
    </source>
</evidence>
<evidence type="ECO:0000303" key="4">
    <source>
    </source>
</evidence>
<evidence type="ECO:0000305" key="5"/>
<evidence type="ECO:0000305" key="6">
    <source>
    </source>
</evidence>
<gene>
    <name evidence="4" type="primary">tndE</name>
</gene>
<reference key="1">
    <citation type="journal article" date="2022" name="Org. Lett.">
        <title>Identification and characterization of a cryptic bifunctional type I diterpene synthase involved in talaronoid biosynthesis from a marine-derived fungus.</title>
        <authorList>
            <person name="Zhang P."/>
            <person name="Wu G."/>
            <person name="Heard S.C."/>
            <person name="Niu C."/>
            <person name="Bell S.A."/>
            <person name="Li F."/>
            <person name="Ye Y."/>
            <person name="Zhang Y."/>
            <person name="Winter J.M."/>
        </authorList>
    </citation>
    <scope>NUCLEOTIDE SEQUENCE [GENOMIC DNA]</scope>
    <scope>FUNCTION</scope>
    <source>
        <strain>CNL-338</strain>
    </source>
</reference>
<sequence length="363" mass="39616">MQSTVVPPGGLVLITGVNGFLASHLALQLIQRGYMVKGTVRTAESASWITEAIMRRHPTGKFQAVVIPILSASGVMDDLVKDVDGIAYVAADTSLNPDPDQVITPGLEALKVALQSATQTQSVKRFVLTSSYTAAVDTFVPSAPDALITRDSWNQTSTPRAWAPPPYDALRALDVYQSLKTESETLFWKFASEAKPSFIQNSVLPGFVVGPIIHRKQRGSTAALVKAYFDDVTCNQAFAWISAPWVVDVVDNALLHLAGLIDEDVQNERLLALAEPFKLGNFARVFEQIDPSRSWPAGDNKHGVKDEGGTKWVADTKRSVAILQRLGQDEGFTPFLESVRRTCLDSDPAWTFGNFLPKSDSQE</sequence>
<proteinExistence type="inferred from homology"/>
<feature type="chain" id="PRO_0000457143" description="NAD-dependent epimerase/dehydratase tndE">
    <location>
        <begin position="1"/>
        <end position="363"/>
    </location>
</feature>
<feature type="transmembrane region" description="Helical" evidence="2">
    <location>
        <begin position="10"/>
        <end position="30"/>
    </location>
</feature>
<feature type="binding site" evidence="1">
    <location>
        <position position="176"/>
    </location>
    <ligand>
        <name>NADP(+)</name>
        <dbReference type="ChEBI" id="CHEBI:58349"/>
    </ligand>
</feature>
<keyword id="KW-0472">Membrane</keyword>
<keyword id="KW-0521">NADP</keyword>
<keyword id="KW-0560">Oxidoreductase</keyword>
<keyword id="KW-0812">Transmembrane</keyword>
<keyword id="KW-1133">Transmembrane helix</keyword>
<organism>
    <name type="scientific">Aspergillus flavipes</name>
    <dbReference type="NCBI Taxonomy" id="41900"/>
    <lineage>
        <taxon>Eukaryota</taxon>
        <taxon>Fungi</taxon>
        <taxon>Dikarya</taxon>
        <taxon>Ascomycota</taxon>
        <taxon>Pezizomycotina</taxon>
        <taxon>Eurotiomycetes</taxon>
        <taxon>Eurotiomycetidae</taxon>
        <taxon>Eurotiales</taxon>
        <taxon>Aspergillaceae</taxon>
        <taxon>Aspergillus</taxon>
        <taxon>Aspergillus subgen. Circumdati</taxon>
    </lineage>
</organism>
<name>TNDE_ASPFV</name>
<protein>
    <recommendedName>
        <fullName evidence="4">NAD-dependent epimerase/dehydratase tndE</fullName>
        <ecNumber evidence="6">1.1.1.-</ecNumber>
    </recommendedName>
    <alternativeName>
        <fullName evidence="4">Talaronoid C biosynthesis cluster protein E</fullName>
    </alternativeName>
</protein>